<name>HBA_SHEEP</name>
<dbReference type="PDB" id="2QU0">
    <property type="method" value="X-ray"/>
    <property type="resolution" value="2.70 A"/>
    <property type="chains" value="A/C=2-142"/>
</dbReference>
<dbReference type="PDBsum" id="2QU0"/>
<dbReference type="SMR" id="P68240"/>
<dbReference type="STRING" id="9940.ENSOARP00000011736"/>
<dbReference type="PaxDb" id="9940-ENSOARP00000011736"/>
<dbReference type="eggNOG" id="KOG3378">
    <property type="taxonomic scope" value="Eukaryota"/>
</dbReference>
<dbReference type="EvolutionaryTrace" id="P68240"/>
<dbReference type="Proteomes" id="UP000002356">
    <property type="component" value="Unplaced"/>
</dbReference>
<dbReference type="GO" id="GO:0072562">
    <property type="term" value="C:blood microparticle"/>
    <property type="evidence" value="ECO:0007669"/>
    <property type="project" value="TreeGrafter"/>
</dbReference>
<dbReference type="GO" id="GO:0031838">
    <property type="term" value="C:haptoglobin-hemoglobin complex"/>
    <property type="evidence" value="ECO:0007669"/>
    <property type="project" value="TreeGrafter"/>
</dbReference>
<dbReference type="GO" id="GO:0005833">
    <property type="term" value="C:hemoglobin complex"/>
    <property type="evidence" value="ECO:0007669"/>
    <property type="project" value="InterPro"/>
</dbReference>
<dbReference type="GO" id="GO:0031720">
    <property type="term" value="F:haptoglobin binding"/>
    <property type="evidence" value="ECO:0007669"/>
    <property type="project" value="TreeGrafter"/>
</dbReference>
<dbReference type="GO" id="GO:0020037">
    <property type="term" value="F:heme binding"/>
    <property type="evidence" value="ECO:0007669"/>
    <property type="project" value="InterPro"/>
</dbReference>
<dbReference type="GO" id="GO:0005506">
    <property type="term" value="F:iron ion binding"/>
    <property type="evidence" value="ECO:0007669"/>
    <property type="project" value="InterPro"/>
</dbReference>
<dbReference type="GO" id="GO:0043177">
    <property type="term" value="F:organic acid binding"/>
    <property type="evidence" value="ECO:0007669"/>
    <property type="project" value="TreeGrafter"/>
</dbReference>
<dbReference type="GO" id="GO:0019825">
    <property type="term" value="F:oxygen binding"/>
    <property type="evidence" value="ECO:0007669"/>
    <property type="project" value="InterPro"/>
</dbReference>
<dbReference type="GO" id="GO:0005344">
    <property type="term" value="F:oxygen carrier activity"/>
    <property type="evidence" value="ECO:0007669"/>
    <property type="project" value="UniProtKB-KW"/>
</dbReference>
<dbReference type="GO" id="GO:0004601">
    <property type="term" value="F:peroxidase activity"/>
    <property type="evidence" value="ECO:0007669"/>
    <property type="project" value="TreeGrafter"/>
</dbReference>
<dbReference type="GO" id="GO:0042744">
    <property type="term" value="P:hydrogen peroxide catabolic process"/>
    <property type="evidence" value="ECO:0007669"/>
    <property type="project" value="TreeGrafter"/>
</dbReference>
<dbReference type="CDD" id="cd08927">
    <property type="entry name" value="Hb-alpha-like"/>
    <property type="match status" value="1"/>
</dbReference>
<dbReference type="FunFam" id="1.10.490.10:FF:000002">
    <property type="entry name" value="Hemoglobin subunit alpha"/>
    <property type="match status" value="1"/>
</dbReference>
<dbReference type="Gene3D" id="1.10.490.10">
    <property type="entry name" value="Globins"/>
    <property type="match status" value="1"/>
</dbReference>
<dbReference type="InterPro" id="IPR000971">
    <property type="entry name" value="Globin"/>
</dbReference>
<dbReference type="InterPro" id="IPR009050">
    <property type="entry name" value="Globin-like_sf"/>
</dbReference>
<dbReference type="InterPro" id="IPR012292">
    <property type="entry name" value="Globin/Proto"/>
</dbReference>
<dbReference type="InterPro" id="IPR002338">
    <property type="entry name" value="Hemoglobin_a-typ"/>
</dbReference>
<dbReference type="InterPro" id="IPR050056">
    <property type="entry name" value="Hemoglobin_oxygen_transport"/>
</dbReference>
<dbReference type="InterPro" id="IPR002339">
    <property type="entry name" value="Hemoglobin_pi"/>
</dbReference>
<dbReference type="PANTHER" id="PTHR11442">
    <property type="entry name" value="HEMOGLOBIN FAMILY MEMBER"/>
    <property type="match status" value="1"/>
</dbReference>
<dbReference type="PANTHER" id="PTHR11442:SF48">
    <property type="entry name" value="HEMOGLOBIN SUBUNIT ALPHA"/>
    <property type="match status" value="1"/>
</dbReference>
<dbReference type="Pfam" id="PF00042">
    <property type="entry name" value="Globin"/>
    <property type="match status" value="1"/>
</dbReference>
<dbReference type="PRINTS" id="PR00612">
    <property type="entry name" value="ALPHAHAEM"/>
</dbReference>
<dbReference type="PRINTS" id="PR00815">
    <property type="entry name" value="PIHAEM"/>
</dbReference>
<dbReference type="SUPFAM" id="SSF46458">
    <property type="entry name" value="Globin-like"/>
    <property type="match status" value="1"/>
</dbReference>
<dbReference type="PROSITE" id="PS01033">
    <property type="entry name" value="GLOBIN"/>
    <property type="match status" value="1"/>
</dbReference>
<proteinExistence type="evidence at protein level"/>
<sequence>MVLSAADKSNVKAAWGKVGGNAGAYGAEALERMFLSFPTTKTYFPHFDLSHGSAQVKGHGEKVAAALTKAVGHLDDLPGTLSDLSDLHAHKLRVDPVNFKLLSHSLLVTLACHLPNDFTPAVHASLDKFLANVSTVLTSKYR</sequence>
<accession>P68240</accession>
<accession>P01970</accession>
<protein>
    <recommendedName>
        <fullName>Hemoglobin subunit alpha-1/2</fullName>
    </recommendedName>
    <alternativeName>
        <fullName>Alpha-1/2-globin</fullName>
    </alternativeName>
    <alternativeName>
        <fullName>Hemoglobin alpha-1/2 chain</fullName>
    </alternativeName>
</protein>
<keyword id="KW-0002">3D-structure</keyword>
<keyword id="KW-0007">Acetylation</keyword>
<keyword id="KW-0903">Direct protein sequencing</keyword>
<keyword id="KW-0349">Heme</keyword>
<keyword id="KW-0408">Iron</keyword>
<keyword id="KW-0479">Metal-binding</keyword>
<keyword id="KW-0561">Oxygen transport</keyword>
<keyword id="KW-0597">Phosphoprotein</keyword>
<keyword id="KW-1185">Reference proteome</keyword>
<keyword id="KW-0813">Transport</keyword>
<feature type="initiator methionine" description="Removed" evidence="5 7">
    <location>
        <position position="1"/>
    </location>
</feature>
<feature type="chain" id="PRO_0000052584" description="Hemoglobin subunit alpha-1/2">
    <location>
        <begin position="2"/>
        <end position="142"/>
    </location>
</feature>
<feature type="domain" description="Globin" evidence="4">
    <location>
        <begin position="2"/>
        <end position="142"/>
    </location>
</feature>
<feature type="binding site" evidence="4">
    <location>
        <position position="59"/>
    </location>
    <ligand>
        <name>O2</name>
        <dbReference type="ChEBI" id="CHEBI:15379"/>
    </ligand>
</feature>
<feature type="binding site" description="proximal binding residue" evidence="4">
    <location>
        <position position="88"/>
    </location>
    <ligand>
        <name>heme b</name>
        <dbReference type="ChEBI" id="CHEBI:60344"/>
    </ligand>
    <ligandPart>
        <name>Fe</name>
        <dbReference type="ChEBI" id="CHEBI:18248"/>
    </ligandPart>
</feature>
<feature type="modified residue" description="Phosphoserine" evidence="3">
    <location>
        <position position="4"/>
    </location>
</feature>
<feature type="modified residue" description="N6-succinyllysine" evidence="2">
    <location>
        <position position="8"/>
    </location>
</feature>
<feature type="modified residue" description="N6-succinyllysine" evidence="2">
    <location>
        <position position="12"/>
    </location>
</feature>
<feature type="modified residue" description="N6-acetyllysine; alternate" evidence="3">
    <location>
        <position position="17"/>
    </location>
</feature>
<feature type="modified residue" description="N6-succinyllysine; alternate" evidence="2">
    <location>
        <position position="17"/>
    </location>
</feature>
<feature type="modified residue" description="Phosphotyrosine" evidence="3">
    <location>
        <position position="25"/>
    </location>
</feature>
<feature type="modified residue" description="Phosphoserine" evidence="3">
    <location>
        <position position="36"/>
    </location>
</feature>
<feature type="modified residue" description="N6-succinyllysine" evidence="2">
    <location>
        <position position="41"/>
    </location>
</feature>
<feature type="modified residue" description="Phosphoserine" evidence="3">
    <location>
        <position position="50"/>
    </location>
</feature>
<feature type="modified residue" description="Phosphoserine" evidence="2">
    <location>
        <position position="103"/>
    </location>
</feature>
<feature type="modified residue" description="Phosphothreonine" evidence="2">
    <location>
        <position position="109"/>
    </location>
</feature>
<feature type="modified residue" description="Phosphoserine" evidence="2">
    <location>
        <position position="125"/>
    </location>
</feature>
<feature type="modified residue" description="Phosphothreonine" evidence="2">
    <location>
        <position position="135"/>
    </location>
</feature>
<feature type="modified residue" description="Phosphothreonine" evidence="2">
    <location>
        <position position="138"/>
    </location>
</feature>
<feature type="modified residue" description="Phosphoserine" evidence="2">
    <location>
        <position position="139"/>
    </location>
</feature>
<feature type="sequence variant" description="In allele alpha-D." evidence="6">
    <original>G</original>
    <variation>D</variation>
    <location>
        <position position="16"/>
    </location>
</feature>
<feature type="sequence variant" description="In alpha-2.">
    <original>G</original>
    <variation>S</variation>
    <location>
        <position position="20"/>
    </location>
</feature>
<feature type="sequence variant" description="In alpha-1-B.">
    <original>D</original>
    <variation>Y</variation>
    <location>
        <position position="76"/>
    </location>
</feature>
<feature type="sequence variant" description="In alpha-2.">
    <original>L</original>
    <variation>H</variation>
    <location>
        <position position="114"/>
    </location>
</feature>
<feature type="sequence variant" description="In alpha-2.">
    <original>N</original>
    <variation>S</variation>
    <location>
        <position position="116"/>
    </location>
</feature>
<feature type="helix" evidence="9">
    <location>
        <begin position="5"/>
        <end position="18"/>
    </location>
</feature>
<feature type="helix" evidence="9">
    <location>
        <begin position="19"/>
        <end position="21"/>
    </location>
</feature>
<feature type="helix" evidence="9">
    <location>
        <begin position="22"/>
        <end position="36"/>
    </location>
</feature>
<feature type="helix" evidence="9">
    <location>
        <begin position="38"/>
        <end position="43"/>
    </location>
</feature>
<feature type="helix" evidence="9">
    <location>
        <begin position="54"/>
        <end position="72"/>
    </location>
</feature>
<feature type="helix" evidence="9">
    <location>
        <begin position="74"/>
        <end position="76"/>
    </location>
</feature>
<feature type="helix" evidence="9">
    <location>
        <begin position="77"/>
        <end position="80"/>
    </location>
</feature>
<feature type="helix" evidence="9">
    <location>
        <begin position="82"/>
        <end position="89"/>
    </location>
</feature>
<feature type="helix" evidence="9">
    <location>
        <begin position="97"/>
        <end position="113"/>
    </location>
</feature>
<feature type="helix" evidence="9">
    <location>
        <begin position="115"/>
        <end position="117"/>
    </location>
</feature>
<feature type="helix" evidence="9">
    <location>
        <begin position="120"/>
        <end position="137"/>
    </location>
</feature>
<organism>
    <name type="scientific">Ovis aries</name>
    <name type="common">Sheep</name>
    <dbReference type="NCBI Taxonomy" id="9940"/>
    <lineage>
        <taxon>Eukaryota</taxon>
        <taxon>Metazoa</taxon>
        <taxon>Chordata</taxon>
        <taxon>Craniata</taxon>
        <taxon>Vertebrata</taxon>
        <taxon>Euteleostomi</taxon>
        <taxon>Mammalia</taxon>
        <taxon>Eutheria</taxon>
        <taxon>Laurasiatheria</taxon>
        <taxon>Artiodactyla</taxon>
        <taxon>Ruminantia</taxon>
        <taxon>Pecora</taxon>
        <taxon>Bovidae</taxon>
        <taxon>Caprinae</taxon>
        <taxon>Ovis</taxon>
    </lineage>
</organism>
<evidence type="ECO:0000250" key="1"/>
<evidence type="ECO:0000250" key="2">
    <source>
        <dbReference type="UniProtKB" id="P01942"/>
    </source>
</evidence>
<evidence type="ECO:0000250" key="3">
    <source>
        <dbReference type="UniProtKB" id="P69905"/>
    </source>
</evidence>
<evidence type="ECO:0000255" key="4">
    <source>
        <dbReference type="PROSITE-ProRule" id="PRU00238"/>
    </source>
</evidence>
<evidence type="ECO:0000269" key="5">
    <source>
    </source>
</evidence>
<evidence type="ECO:0000269" key="6">
    <source>
    </source>
</evidence>
<evidence type="ECO:0000269" key="7">
    <source>
    </source>
</evidence>
<evidence type="ECO:0000305" key="8">
    <source>
    </source>
</evidence>
<evidence type="ECO:0007829" key="9">
    <source>
        <dbReference type="PDB" id="2QU0"/>
    </source>
</evidence>
<reference key="1">
    <citation type="journal article" date="1967" name="Biochem. J.">
        <title>A partial amino acid sequence for sheep haemoblogin A.</title>
        <authorList>
            <person name="Beale D."/>
        </authorList>
    </citation>
    <scope>PROTEIN SEQUENCE OF 2-142</scope>
    <source>
        <strain>Clan breed</strain>
        <strain>Soay</strain>
    </source>
</reference>
<reference key="2">
    <citation type="journal article" date="1968" name="J. Biol. Chem.">
        <title>The structure of sheep hemoglobins. 3. Structural studies on the alpha chain of hemoglobin A.</title>
        <authorList>
            <person name="Wilson J.B."/>
            <person name="Brandt G."/>
            <person name="Huisman T.H.J."/>
        </authorList>
    </citation>
    <scope>PROTEIN SEQUENCE OF 2-142</scope>
    <source>
        <strain>Rambouillet</strain>
    </source>
</reference>
<reference key="3">
    <citation type="journal article" date="1968" name="Biochim. Biophys. Acta">
        <title>Sheep hemoglobin D, an alpha-chain variant with one apparent amino acid substitution (alpha 15 Gly--&gt;Asp).</title>
        <authorList>
            <person name="Huisman T.H.J."/>
            <person name="Dozy A.M."/>
            <person name="Wilson J.B."/>
            <person name="Efremov G.D."/>
            <person name="Vaskov B."/>
        </authorList>
    </citation>
    <scope>VARIANT ASP-16</scope>
</reference>
<comment type="function">
    <text evidence="1">Involved in oxygen transport from the lung to the various peripheral tissues.</text>
</comment>
<comment type="subunit">
    <text evidence="1">Heterotetramer of two alpha chains and two beta chains.</text>
</comment>
<comment type="polymorphism">
    <text evidence="6">Different alleles are known. The alpha-A allelic variant contains Gly-16.</text>
</comment>
<comment type="miscellaneous">
    <text>Adult sheep and other mammalian species produce unequal amounts of alpha-globin from their non-allelic loci.</text>
</comment>
<comment type="miscellaneous">
    <text>The alpha-1 sequence is shown.</text>
</comment>
<comment type="miscellaneous">
    <text evidence="8">Sheep insoluble core region (positions 101-140) contains 1 more Gly, one more Glu, and two fewer Ser than the corresponding region shown (PubMed:6033754). According to PubMed:5658545 it contains one more Thr and one less Ser.</text>
</comment>
<comment type="similarity">
    <text evidence="4">Belongs to the globin family.</text>
</comment>